<reference key="1">
    <citation type="submission" date="2008-05" db="EMBL/GenBank/DDBJ databases">
        <title>Genome sequence of Clostridium botulinum Ba4 strain 657.</title>
        <authorList>
            <person name="Shrivastava S."/>
            <person name="Brown J.L."/>
            <person name="Bruce D."/>
            <person name="Detter C."/>
            <person name="Munk C."/>
            <person name="Smith L.A."/>
            <person name="Smith T.J."/>
            <person name="Sutton G."/>
            <person name="Brettin T.S."/>
        </authorList>
    </citation>
    <scope>NUCLEOTIDE SEQUENCE [LARGE SCALE GENOMIC DNA]</scope>
    <source>
        <strain>657 / Type Ba4</strain>
    </source>
</reference>
<organism>
    <name type="scientific">Clostridium botulinum (strain 657 / Type Ba4)</name>
    <dbReference type="NCBI Taxonomy" id="515621"/>
    <lineage>
        <taxon>Bacteria</taxon>
        <taxon>Bacillati</taxon>
        <taxon>Bacillota</taxon>
        <taxon>Clostridia</taxon>
        <taxon>Eubacteriales</taxon>
        <taxon>Clostridiaceae</taxon>
        <taxon>Clostridium</taxon>
    </lineage>
</organism>
<sequence length="229" mass="25784">MSKNSVIIVAAGKGKRMNSSISKQFLQIKNKPILYYTLNKFSTHESIDEIVLVALEDKIEVCSDIIDKYNINKVSKIVPGGKERQDSVYNGLKAVSKDCEVVLIHDAARPFVTSDIIENGIRYVNQYGAAACGVIPKDTVKIKDEKGFAIDTPNREDLFIVQTPQCFNYNIILDCHEKLKKHNKKVTDDTMVLENYGKSVYLYEGSYSNIKITTPEDLILGEQILEKLT</sequence>
<protein>
    <recommendedName>
        <fullName evidence="1">2-C-methyl-D-erythritol 4-phosphate cytidylyltransferase</fullName>
        <ecNumber evidence="1">2.7.7.60</ecNumber>
    </recommendedName>
    <alternativeName>
        <fullName evidence="1">4-diphosphocytidyl-2C-methyl-D-erythritol synthase</fullName>
    </alternativeName>
    <alternativeName>
        <fullName evidence="1">MEP cytidylyltransferase</fullName>
        <shortName evidence="1">MCT</shortName>
    </alternativeName>
</protein>
<gene>
    <name evidence="1" type="primary">ispD</name>
    <name type="ordered locus">CLJ_B3816</name>
</gene>
<comment type="function">
    <text evidence="1">Catalyzes the formation of 4-diphosphocytidyl-2-C-methyl-D-erythritol from CTP and 2-C-methyl-D-erythritol 4-phosphate (MEP).</text>
</comment>
<comment type="catalytic activity">
    <reaction evidence="1">
        <text>2-C-methyl-D-erythritol 4-phosphate + CTP + H(+) = 4-CDP-2-C-methyl-D-erythritol + diphosphate</text>
        <dbReference type="Rhea" id="RHEA:13429"/>
        <dbReference type="ChEBI" id="CHEBI:15378"/>
        <dbReference type="ChEBI" id="CHEBI:33019"/>
        <dbReference type="ChEBI" id="CHEBI:37563"/>
        <dbReference type="ChEBI" id="CHEBI:57823"/>
        <dbReference type="ChEBI" id="CHEBI:58262"/>
        <dbReference type="EC" id="2.7.7.60"/>
    </reaction>
</comment>
<comment type="pathway">
    <text evidence="1">Isoprenoid biosynthesis; isopentenyl diphosphate biosynthesis via DXP pathway; isopentenyl diphosphate from 1-deoxy-D-xylulose 5-phosphate: step 2/6.</text>
</comment>
<comment type="similarity">
    <text evidence="1">Belongs to the IspD/TarI cytidylyltransferase family. IspD subfamily.</text>
</comment>
<evidence type="ECO:0000255" key="1">
    <source>
        <dbReference type="HAMAP-Rule" id="MF_00108"/>
    </source>
</evidence>
<feature type="chain" id="PRO_1000202890" description="2-C-methyl-D-erythritol 4-phosphate cytidylyltransferase">
    <location>
        <begin position="1"/>
        <end position="229"/>
    </location>
</feature>
<feature type="site" description="Transition state stabilizer" evidence="1">
    <location>
        <position position="16"/>
    </location>
</feature>
<feature type="site" description="Transition state stabilizer" evidence="1">
    <location>
        <position position="23"/>
    </location>
</feature>
<feature type="site" description="Positions MEP for the nucleophilic attack" evidence="1">
    <location>
        <position position="155"/>
    </location>
</feature>
<feature type="site" description="Positions MEP for the nucleophilic attack" evidence="1">
    <location>
        <position position="211"/>
    </location>
</feature>
<keyword id="KW-0414">Isoprene biosynthesis</keyword>
<keyword id="KW-0548">Nucleotidyltransferase</keyword>
<keyword id="KW-0808">Transferase</keyword>
<dbReference type="EC" id="2.7.7.60" evidence="1"/>
<dbReference type="EMBL" id="CP001083">
    <property type="protein sequence ID" value="ACQ52648.1"/>
    <property type="molecule type" value="Genomic_DNA"/>
</dbReference>
<dbReference type="RefSeq" id="WP_003360173.1">
    <property type="nucleotide sequence ID" value="NC_012658.1"/>
</dbReference>
<dbReference type="SMR" id="C3KVS6"/>
<dbReference type="KEGG" id="cbi:CLJ_B3816"/>
<dbReference type="HOGENOM" id="CLU_061281_2_2_9"/>
<dbReference type="UniPathway" id="UPA00056">
    <property type="reaction ID" value="UER00093"/>
</dbReference>
<dbReference type="Proteomes" id="UP000002333">
    <property type="component" value="Chromosome"/>
</dbReference>
<dbReference type="GO" id="GO:0050518">
    <property type="term" value="F:2-C-methyl-D-erythritol 4-phosphate cytidylyltransferase activity"/>
    <property type="evidence" value="ECO:0007669"/>
    <property type="project" value="UniProtKB-UniRule"/>
</dbReference>
<dbReference type="GO" id="GO:0019288">
    <property type="term" value="P:isopentenyl diphosphate biosynthetic process, methylerythritol 4-phosphate pathway"/>
    <property type="evidence" value="ECO:0007669"/>
    <property type="project" value="UniProtKB-UniRule"/>
</dbReference>
<dbReference type="CDD" id="cd02516">
    <property type="entry name" value="CDP-ME_synthetase"/>
    <property type="match status" value="1"/>
</dbReference>
<dbReference type="FunFam" id="3.90.550.10:FF:000003">
    <property type="entry name" value="2-C-methyl-D-erythritol 4-phosphate cytidylyltransferase"/>
    <property type="match status" value="1"/>
</dbReference>
<dbReference type="Gene3D" id="3.90.550.10">
    <property type="entry name" value="Spore Coat Polysaccharide Biosynthesis Protein SpsA, Chain A"/>
    <property type="match status" value="1"/>
</dbReference>
<dbReference type="HAMAP" id="MF_00108">
    <property type="entry name" value="IspD"/>
    <property type="match status" value="1"/>
</dbReference>
<dbReference type="InterPro" id="IPR001228">
    <property type="entry name" value="IspD"/>
</dbReference>
<dbReference type="InterPro" id="IPR034683">
    <property type="entry name" value="IspD/TarI"/>
</dbReference>
<dbReference type="InterPro" id="IPR050088">
    <property type="entry name" value="IspD/TarI_cytidylyltransf_bact"/>
</dbReference>
<dbReference type="InterPro" id="IPR018294">
    <property type="entry name" value="ISPD_synthase_CS"/>
</dbReference>
<dbReference type="InterPro" id="IPR029044">
    <property type="entry name" value="Nucleotide-diphossugar_trans"/>
</dbReference>
<dbReference type="NCBIfam" id="TIGR00453">
    <property type="entry name" value="ispD"/>
    <property type="match status" value="1"/>
</dbReference>
<dbReference type="NCBIfam" id="NF001183">
    <property type="entry name" value="PRK00155.1-3"/>
    <property type="match status" value="1"/>
</dbReference>
<dbReference type="PANTHER" id="PTHR32125">
    <property type="entry name" value="2-C-METHYL-D-ERYTHRITOL 4-PHOSPHATE CYTIDYLYLTRANSFERASE, CHLOROPLASTIC"/>
    <property type="match status" value="1"/>
</dbReference>
<dbReference type="PANTHER" id="PTHR32125:SF4">
    <property type="entry name" value="2-C-METHYL-D-ERYTHRITOL 4-PHOSPHATE CYTIDYLYLTRANSFERASE, CHLOROPLASTIC"/>
    <property type="match status" value="1"/>
</dbReference>
<dbReference type="Pfam" id="PF01128">
    <property type="entry name" value="IspD"/>
    <property type="match status" value="1"/>
</dbReference>
<dbReference type="SUPFAM" id="SSF53448">
    <property type="entry name" value="Nucleotide-diphospho-sugar transferases"/>
    <property type="match status" value="1"/>
</dbReference>
<dbReference type="PROSITE" id="PS01295">
    <property type="entry name" value="ISPD"/>
    <property type="match status" value="1"/>
</dbReference>
<name>ISPD_CLOB6</name>
<accession>C3KVS6</accession>
<proteinExistence type="inferred from homology"/>